<dbReference type="EMBL" id="AE014298">
    <property type="protein sequence ID" value="AAF48236.3"/>
    <property type="molecule type" value="Genomic_DNA"/>
</dbReference>
<dbReference type="EMBL" id="AY069698">
    <property type="protein sequence ID" value="AAL39843.1"/>
    <property type="status" value="ALT_INIT"/>
    <property type="molecule type" value="mRNA"/>
</dbReference>
<dbReference type="EMBL" id="BT031293">
    <property type="protein sequence ID" value="ABY20534.1"/>
    <property type="molecule type" value="mRNA"/>
</dbReference>
<dbReference type="EMBL" id="BT133216">
    <property type="protein sequence ID" value="AFA28457.1"/>
    <property type="molecule type" value="mRNA"/>
</dbReference>
<dbReference type="RefSeq" id="NP_001285190.1">
    <property type="nucleotide sequence ID" value="NM_001298261.1"/>
</dbReference>
<dbReference type="RefSeq" id="NP_001285191.1">
    <property type="nucleotide sequence ID" value="NM_001298262.1"/>
</dbReference>
<dbReference type="RefSeq" id="NP_572862.2">
    <property type="nucleotide sequence ID" value="NM_132634.4"/>
</dbReference>
<dbReference type="SMR" id="Q9VYG1"/>
<dbReference type="BioGRID" id="58654">
    <property type="interactions" value="6"/>
</dbReference>
<dbReference type="FunCoup" id="Q9VYG1">
    <property type="interactions" value="2290"/>
</dbReference>
<dbReference type="IntAct" id="Q9VYG1">
    <property type="interactions" value="5"/>
</dbReference>
<dbReference type="STRING" id="7227.FBpp0309260"/>
<dbReference type="PaxDb" id="7227-FBpp0073558"/>
<dbReference type="DNASU" id="32269"/>
<dbReference type="EnsemblMetazoa" id="FBtr0073727">
    <property type="protein sequence ID" value="FBpp0073558"/>
    <property type="gene ID" value="FBgn0030457"/>
</dbReference>
<dbReference type="EnsemblMetazoa" id="FBtr0340298">
    <property type="protein sequence ID" value="FBpp0309259"/>
    <property type="gene ID" value="FBgn0030457"/>
</dbReference>
<dbReference type="EnsemblMetazoa" id="FBtr0340299">
    <property type="protein sequence ID" value="FBpp0309260"/>
    <property type="gene ID" value="FBgn0030457"/>
</dbReference>
<dbReference type="GeneID" id="32269"/>
<dbReference type="KEGG" id="dme:Dmel_CG12096"/>
<dbReference type="UCSC" id="CG12096-RA">
    <property type="organism name" value="d. melanogaster"/>
</dbReference>
<dbReference type="AGR" id="FB:FBgn0030457"/>
<dbReference type="FlyBase" id="FBgn0030457">
    <property type="gene designation" value="CG12096"/>
</dbReference>
<dbReference type="VEuPathDB" id="VectorBase:FBgn0030457"/>
<dbReference type="eggNOG" id="KOG4413">
    <property type="taxonomic scope" value="Eukaryota"/>
</dbReference>
<dbReference type="HOGENOM" id="CLU_043710_0_0_1"/>
<dbReference type="InParanoid" id="Q9VYG1"/>
<dbReference type="OMA" id="WGQEYIS"/>
<dbReference type="OrthoDB" id="10250600at2759"/>
<dbReference type="PhylomeDB" id="Q9VYG1"/>
<dbReference type="Reactome" id="R-DME-9907900">
    <property type="pathway name" value="Proteasome assembly"/>
</dbReference>
<dbReference type="BioGRID-ORCS" id="32269">
    <property type="hits" value="0 hits in 1 CRISPR screen"/>
</dbReference>
<dbReference type="GenomeRNAi" id="32269"/>
<dbReference type="PRO" id="PR:Q9VYG1"/>
<dbReference type="Proteomes" id="UP000000803">
    <property type="component" value="Chromosome X"/>
</dbReference>
<dbReference type="Bgee" id="FBgn0030457">
    <property type="expression patterns" value="Expressed in visceral muscle cell in digestive tract and 84 other cell types or tissues"/>
</dbReference>
<dbReference type="ExpressionAtlas" id="Q9VYG1">
    <property type="expression patterns" value="baseline and differential"/>
</dbReference>
<dbReference type="GO" id="GO:0043248">
    <property type="term" value="P:proteasome assembly"/>
    <property type="evidence" value="ECO:0007669"/>
    <property type="project" value="InterPro"/>
</dbReference>
<dbReference type="InterPro" id="IPR016024">
    <property type="entry name" value="ARM-type_fold"/>
</dbReference>
<dbReference type="InterPro" id="IPR019538">
    <property type="entry name" value="PSMD5"/>
</dbReference>
<dbReference type="PANTHER" id="PTHR13554:SF10">
    <property type="entry name" value="26S PROTEASOME NON-ATPASE REGULATORY SUBUNIT 5"/>
    <property type="match status" value="1"/>
</dbReference>
<dbReference type="PANTHER" id="PTHR13554">
    <property type="entry name" value="26S PROTEASOME NON-ATPASE REGULATORY SUBUNIT 5-RELATED"/>
    <property type="match status" value="1"/>
</dbReference>
<dbReference type="Pfam" id="PF10508">
    <property type="entry name" value="Proteasom_PSMB"/>
    <property type="match status" value="1"/>
</dbReference>
<dbReference type="SUPFAM" id="SSF48371">
    <property type="entry name" value="ARM repeat"/>
    <property type="match status" value="1"/>
</dbReference>
<keyword id="KW-1185">Reference proteome</keyword>
<gene>
    <name type="ORF">CG12096</name>
</gene>
<name>PSMD5_DROME</name>
<protein>
    <recommendedName>
        <fullName evidence="1">26S proteasome non-ATPase regulatory subunit 5</fullName>
    </recommendedName>
    <alternativeName>
        <fullName evidence="1">26S proteasome subunit S5B</fullName>
        <shortName evidence="5">dS5b</shortName>
    </alternativeName>
</protein>
<organism>
    <name type="scientific">Drosophila melanogaster</name>
    <name type="common">Fruit fly</name>
    <dbReference type="NCBI Taxonomy" id="7227"/>
    <lineage>
        <taxon>Eukaryota</taxon>
        <taxon>Metazoa</taxon>
        <taxon>Ecdysozoa</taxon>
        <taxon>Arthropoda</taxon>
        <taxon>Hexapoda</taxon>
        <taxon>Insecta</taxon>
        <taxon>Pterygota</taxon>
        <taxon>Neoptera</taxon>
        <taxon>Endopterygota</taxon>
        <taxon>Diptera</taxon>
        <taxon>Brachycera</taxon>
        <taxon>Muscomorpha</taxon>
        <taxon>Ephydroidea</taxon>
        <taxon>Drosophilidae</taxon>
        <taxon>Drosophila</taxon>
        <taxon>Sophophora</taxon>
    </lineage>
</organism>
<feature type="chain" id="PRO_0000424894" description="26S proteasome non-ATPase regulatory subunit 5">
    <location>
        <begin position="1"/>
        <end position="506"/>
    </location>
</feature>
<feature type="mutagenesis site" description="Abolishes interaction with PI31." evidence="4">
    <original>E</original>
    <variation>A</variation>
    <location>
        <position position="44"/>
    </location>
</feature>
<feature type="mutagenesis site" description="Does not affect interaction with PI31." evidence="4">
    <original>R</original>
    <variation>A</variation>
    <location>
        <position position="45"/>
    </location>
</feature>
<feature type="mutagenesis site" description="Does not affect interaction with PI31." evidence="4">
    <original>L</original>
    <variation>A</variation>
    <location>
        <position position="46"/>
    </location>
</feature>
<feature type="mutagenesis site" description="Does not affect interaction with PI31." evidence="4">
    <original>P</original>
    <variation>A</variation>
    <location>
        <position position="165"/>
    </location>
</feature>
<feature type="mutagenesis site" description="Does not affect interaction with PI31." evidence="4">
    <original>D</original>
    <variation>A</variation>
    <location>
        <position position="172"/>
    </location>
</feature>
<feature type="mutagenesis site" description="Does not affect interaction with PI31." evidence="4">
    <original>V</original>
    <variation>T</variation>
    <location>
        <position position="261"/>
    </location>
</feature>
<feature type="mutagenesis site" description="Abolishes interaction with PI31." evidence="4">
    <original>R</original>
    <variation>A</variation>
    <location>
        <position position="263"/>
    </location>
</feature>
<feature type="sequence conflict" description="In Ref. 4; ABY20534." evidence="6" ref="4">
    <original>A</original>
    <variation>T</variation>
    <location>
        <position position="326"/>
    </location>
</feature>
<proteinExistence type="evidence at protein level"/>
<evidence type="ECO:0000250" key="1">
    <source>
        <dbReference type="UniProtKB" id="Q16401"/>
    </source>
</evidence>
<evidence type="ECO:0000255" key="2"/>
<evidence type="ECO:0000269" key="3">
    <source>
    </source>
</evidence>
<evidence type="ECO:0000269" key="4">
    <source>
    </source>
</evidence>
<evidence type="ECO:0000303" key="5">
    <source>
    </source>
</evidence>
<evidence type="ECO:0000305" key="6"/>
<evidence type="ECO:0000312" key="7">
    <source>
        <dbReference type="EMBL" id="AAF48236.3"/>
    </source>
</evidence>
<evidence type="ECO:0000312" key="8">
    <source>
        <dbReference type="EMBL" id="AAL39843.1"/>
    </source>
</evidence>
<evidence type="ECO:0000312" key="9">
    <source>
        <dbReference type="EMBL" id="AFA28457.1"/>
    </source>
</evidence>
<sequence length="506" mass="56668">MEMEDNWWVTKLKALESKPQRLDALTAMNSAIAKEAALPRQIIERLLTTDQLYDCANPAADSHVPKDQAVDVTLELLCHCLDQLAMDTADEQLSSLLRRGLTHSNPALRAQVLASLFKKLLRQLTVGQVLTLPNNELIFLILDELKQPDTQSTSLAINILSIVLPQRISNADVQAKLVQLLKQNEIVRCRAYELAVVLAKKSATLLSDVTFILDAALSELDNDDVLLQASVMELLVPLAEQNHGLSYMERRRVLDIISYRVQRVEEHPLDALLVPSIMKFFGKISVYQPLKIIGGYPHMLACLFMQLQSEDESILPTAMDTLANLATTPQGKILLNMHFSGAMEKSFKKYGSHTKKLSAHIKKRLLNSLDVIYDFKTPPATEIINIGKNWYECFAGGAHANIIMDLINTPFPDLQMAALSFLKTICKYNWGIVALKNTGGAVEFLLSRQKDLHRDIKYMKWQIMEILSASAEFSPTETIRFTAYVNEGPYHVQADLDVATEPQGNA</sequence>
<accession>Q9VYG1</accession>
<accession>A9UNC9</accession>
<accession>Q7K0M3</accession>
<accession>Q8SZZ0</accession>
<reference evidence="7" key="1">
    <citation type="journal article" date="2000" name="Science">
        <title>The genome sequence of Drosophila melanogaster.</title>
        <authorList>
            <person name="Adams M.D."/>
            <person name="Celniker S.E."/>
            <person name="Holt R.A."/>
            <person name="Evans C.A."/>
            <person name="Gocayne J.D."/>
            <person name="Amanatides P.G."/>
            <person name="Scherer S.E."/>
            <person name="Li P.W."/>
            <person name="Hoskins R.A."/>
            <person name="Galle R.F."/>
            <person name="George R.A."/>
            <person name="Lewis S.E."/>
            <person name="Richards S."/>
            <person name="Ashburner M."/>
            <person name="Henderson S.N."/>
            <person name="Sutton G.G."/>
            <person name="Wortman J.R."/>
            <person name="Yandell M.D."/>
            <person name="Zhang Q."/>
            <person name="Chen L.X."/>
            <person name="Brandon R.C."/>
            <person name="Rogers Y.-H.C."/>
            <person name="Blazej R.G."/>
            <person name="Champe M."/>
            <person name="Pfeiffer B.D."/>
            <person name="Wan K.H."/>
            <person name="Doyle C."/>
            <person name="Baxter E.G."/>
            <person name="Helt G."/>
            <person name="Nelson C.R."/>
            <person name="Miklos G.L.G."/>
            <person name="Abril J.F."/>
            <person name="Agbayani A."/>
            <person name="An H.-J."/>
            <person name="Andrews-Pfannkoch C."/>
            <person name="Baldwin D."/>
            <person name="Ballew R.M."/>
            <person name="Basu A."/>
            <person name="Baxendale J."/>
            <person name="Bayraktaroglu L."/>
            <person name="Beasley E.M."/>
            <person name="Beeson K.Y."/>
            <person name="Benos P.V."/>
            <person name="Berman B.P."/>
            <person name="Bhandari D."/>
            <person name="Bolshakov S."/>
            <person name="Borkova D."/>
            <person name="Botchan M.R."/>
            <person name="Bouck J."/>
            <person name="Brokstein P."/>
            <person name="Brottier P."/>
            <person name="Burtis K.C."/>
            <person name="Busam D.A."/>
            <person name="Butler H."/>
            <person name="Cadieu E."/>
            <person name="Center A."/>
            <person name="Chandra I."/>
            <person name="Cherry J.M."/>
            <person name="Cawley S."/>
            <person name="Dahlke C."/>
            <person name="Davenport L.B."/>
            <person name="Davies P."/>
            <person name="de Pablos B."/>
            <person name="Delcher A."/>
            <person name="Deng Z."/>
            <person name="Mays A.D."/>
            <person name="Dew I."/>
            <person name="Dietz S.M."/>
            <person name="Dodson K."/>
            <person name="Doup L.E."/>
            <person name="Downes M."/>
            <person name="Dugan-Rocha S."/>
            <person name="Dunkov B.C."/>
            <person name="Dunn P."/>
            <person name="Durbin K.J."/>
            <person name="Evangelista C.C."/>
            <person name="Ferraz C."/>
            <person name="Ferriera S."/>
            <person name="Fleischmann W."/>
            <person name="Fosler C."/>
            <person name="Gabrielian A.E."/>
            <person name="Garg N.S."/>
            <person name="Gelbart W.M."/>
            <person name="Glasser K."/>
            <person name="Glodek A."/>
            <person name="Gong F."/>
            <person name="Gorrell J.H."/>
            <person name="Gu Z."/>
            <person name="Guan P."/>
            <person name="Harris M."/>
            <person name="Harris N.L."/>
            <person name="Harvey D.A."/>
            <person name="Heiman T.J."/>
            <person name="Hernandez J.R."/>
            <person name="Houck J."/>
            <person name="Hostin D."/>
            <person name="Houston K.A."/>
            <person name="Howland T.J."/>
            <person name="Wei M.-H."/>
            <person name="Ibegwam C."/>
            <person name="Jalali M."/>
            <person name="Kalush F."/>
            <person name="Karpen G.H."/>
            <person name="Ke Z."/>
            <person name="Kennison J.A."/>
            <person name="Ketchum K.A."/>
            <person name="Kimmel B.E."/>
            <person name="Kodira C.D."/>
            <person name="Kraft C.L."/>
            <person name="Kravitz S."/>
            <person name="Kulp D."/>
            <person name="Lai Z."/>
            <person name="Lasko P."/>
            <person name="Lei Y."/>
            <person name="Levitsky A.A."/>
            <person name="Li J.H."/>
            <person name="Li Z."/>
            <person name="Liang Y."/>
            <person name="Lin X."/>
            <person name="Liu X."/>
            <person name="Mattei B."/>
            <person name="McIntosh T.C."/>
            <person name="McLeod M.P."/>
            <person name="McPherson D."/>
            <person name="Merkulov G."/>
            <person name="Milshina N.V."/>
            <person name="Mobarry C."/>
            <person name="Morris J."/>
            <person name="Moshrefi A."/>
            <person name="Mount S.M."/>
            <person name="Moy M."/>
            <person name="Murphy B."/>
            <person name="Murphy L."/>
            <person name="Muzny D.M."/>
            <person name="Nelson D.L."/>
            <person name="Nelson D.R."/>
            <person name="Nelson K.A."/>
            <person name="Nixon K."/>
            <person name="Nusskern D.R."/>
            <person name="Pacleb J.M."/>
            <person name="Palazzolo M."/>
            <person name="Pittman G.S."/>
            <person name="Pan S."/>
            <person name="Pollard J."/>
            <person name="Puri V."/>
            <person name="Reese M.G."/>
            <person name="Reinert K."/>
            <person name="Remington K."/>
            <person name="Saunders R.D.C."/>
            <person name="Scheeler F."/>
            <person name="Shen H."/>
            <person name="Shue B.C."/>
            <person name="Siden-Kiamos I."/>
            <person name="Simpson M."/>
            <person name="Skupski M.P."/>
            <person name="Smith T.J."/>
            <person name="Spier E."/>
            <person name="Spradling A.C."/>
            <person name="Stapleton M."/>
            <person name="Strong R."/>
            <person name="Sun E."/>
            <person name="Svirskas R."/>
            <person name="Tector C."/>
            <person name="Turner R."/>
            <person name="Venter E."/>
            <person name="Wang A.H."/>
            <person name="Wang X."/>
            <person name="Wang Z.-Y."/>
            <person name="Wassarman D.A."/>
            <person name="Weinstock G.M."/>
            <person name="Weissenbach J."/>
            <person name="Williams S.M."/>
            <person name="Woodage T."/>
            <person name="Worley K.C."/>
            <person name="Wu D."/>
            <person name="Yang S."/>
            <person name="Yao Q.A."/>
            <person name="Ye J."/>
            <person name="Yeh R.-F."/>
            <person name="Zaveri J.S."/>
            <person name="Zhan M."/>
            <person name="Zhang G."/>
            <person name="Zhao Q."/>
            <person name="Zheng L."/>
            <person name="Zheng X.H."/>
            <person name="Zhong F.N."/>
            <person name="Zhong W."/>
            <person name="Zhou X."/>
            <person name="Zhu S.C."/>
            <person name="Zhu X."/>
            <person name="Smith H.O."/>
            <person name="Gibbs R.A."/>
            <person name="Myers E.W."/>
            <person name="Rubin G.M."/>
            <person name="Venter J.C."/>
        </authorList>
    </citation>
    <scope>NUCLEOTIDE SEQUENCE [LARGE SCALE GENOMIC DNA]</scope>
    <source>
        <strain>Berkeley</strain>
    </source>
</reference>
<reference evidence="7" key="2">
    <citation type="journal article" date="2002" name="Genome Biol.">
        <title>Annotation of the Drosophila melanogaster euchromatic genome: a systematic review.</title>
        <authorList>
            <person name="Misra S."/>
            <person name="Crosby M.A."/>
            <person name="Mungall C.J."/>
            <person name="Matthews B.B."/>
            <person name="Campbell K.S."/>
            <person name="Hradecky P."/>
            <person name="Huang Y."/>
            <person name="Kaminker J.S."/>
            <person name="Millburn G.H."/>
            <person name="Prochnik S.E."/>
            <person name="Smith C.D."/>
            <person name="Tupy J.L."/>
            <person name="Whitfield E.J."/>
            <person name="Bayraktaroglu L."/>
            <person name="Berman B.P."/>
            <person name="Bettencourt B.R."/>
            <person name="Celniker S.E."/>
            <person name="de Grey A.D.N.J."/>
            <person name="Drysdale R.A."/>
            <person name="Harris N.L."/>
            <person name="Richter J."/>
            <person name="Russo S."/>
            <person name="Schroeder A.J."/>
            <person name="Shu S.Q."/>
            <person name="Stapleton M."/>
            <person name="Yamada C."/>
            <person name="Ashburner M."/>
            <person name="Gelbart W.M."/>
            <person name="Rubin G.M."/>
            <person name="Lewis S.E."/>
        </authorList>
    </citation>
    <scope>GENOME REANNOTATION</scope>
    <source>
        <strain>Berkeley</strain>
    </source>
</reference>
<reference evidence="6 8" key="3">
    <citation type="journal article" date="2002" name="Genome Biol.">
        <title>A Drosophila full-length cDNA resource.</title>
        <authorList>
            <person name="Stapleton M."/>
            <person name="Carlson J.W."/>
            <person name="Brokstein P."/>
            <person name="Yu C."/>
            <person name="Champe M."/>
            <person name="George R.A."/>
            <person name="Guarin H."/>
            <person name="Kronmiller B."/>
            <person name="Pacleb J.M."/>
            <person name="Park S."/>
            <person name="Wan K.H."/>
            <person name="Rubin G.M."/>
            <person name="Celniker S.E."/>
        </authorList>
    </citation>
    <scope>NUCLEOTIDE SEQUENCE [LARGE SCALE MRNA] OF 6-506</scope>
    <source>
        <strain evidence="3">Berkeley</strain>
        <tissue evidence="3">Embryo</tissue>
    </source>
</reference>
<reference evidence="9" key="4">
    <citation type="submission" date="2012-02" db="EMBL/GenBank/DDBJ databases">
        <authorList>
            <person name="Stapleton M."/>
            <person name="Carlson J."/>
            <person name="Booth B."/>
            <person name="Frise E."/>
            <person name="Kapadia B."/>
            <person name="Park S."/>
            <person name="Wan K."/>
            <person name="Yu C."/>
            <person name="Celniker S."/>
        </authorList>
    </citation>
    <scope>NUCLEOTIDE SEQUENCE [LARGE SCALE MRNA]</scope>
    <source>
        <strain>Berkeley</strain>
        <tissue>Embryo</tissue>
    </source>
</reference>
<reference evidence="6" key="5">
    <citation type="journal article" date="2013" name="Cell">
        <title>Proteasome regulation by ADP-ribosylation.</title>
        <authorList>
            <person name="Cho-Park P.F."/>
            <person name="Steller H."/>
        </authorList>
    </citation>
    <scope>INTERACTION WITH PI31 AND RPT2</scope>
    <scope>MUTAGENESIS OF GLU-44; ARG-45; LEU-46; PRO-165; ASP-172; VAL-261 AND ARG-263</scope>
</reference>
<comment type="function">
    <text evidence="1">Acts as a chaperone during the assembly of the 26S proteasome.</text>
</comment>
<comment type="subunit">
    <text evidence="4">Interacts with PI31; this interaction is increased by PI31 ADP-ribosylation. Interacts with Rpt2.</text>
</comment>
<comment type="interaction">
    <interactant intactId="EBI-129453">
        <id>Q9VYG1</id>
    </interactant>
    <interactant intactId="EBI-144377">
        <id>Q9V637</id>
        <label>PI31</label>
    </interactant>
    <organismsDiffer>false</organismsDiffer>
    <experiments>2</experiments>
</comment>
<comment type="interaction">
    <interactant intactId="EBI-129453">
        <id>Q9VYG1</id>
    </interactant>
    <interactant intactId="EBI-6924616">
        <id>Q9XZC3</id>
        <label>Rpt5</label>
    </interactant>
    <organismsDiffer>false</organismsDiffer>
    <experiments>2</experiments>
</comment>
<comment type="similarity">
    <text evidence="2">Belongs to the proteasome subunit S5B/HSM3 family.</text>
</comment>
<comment type="sequence caution" evidence="6">
    <conflict type="erroneous initiation">
        <sequence resource="EMBL-CDS" id="AAL39843"/>
    </conflict>
    <text>Truncated N-terminus.</text>
</comment>